<proteinExistence type="evidence at transcript level"/>
<feature type="chain" id="PRO_0000154921" description="Inward rectifier potassium channel 2">
    <location>
        <begin position="1"/>
        <end position="427"/>
    </location>
</feature>
<feature type="topological domain" description="Cytoplasmic" evidence="1">
    <location>
        <begin position="1"/>
        <end position="81"/>
    </location>
</feature>
<feature type="transmembrane region" description="Helical; Name=M1" evidence="1">
    <location>
        <begin position="82"/>
        <end position="106"/>
    </location>
</feature>
<feature type="topological domain" description="Extracellular" evidence="1">
    <location>
        <begin position="107"/>
        <end position="128"/>
    </location>
</feature>
<feature type="intramembrane region" description="Helical; Pore-forming; Name=H5" evidence="1">
    <location>
        <begin position="129"/>
        <end position="140"/>
    </location>
</feature>
<feature type="intramembrane region" description="Pore-forming" evidence="1">
    <location>
        <begin position="141"/>
        <end position="147"/>
    </location>
</feature>
<feature type="topological domain" description="Extracellular" evidence="1">
    <location>
        <begin position="148"/>
        <end position="156"/>
    </location>
</feature>
<feature type="transmembrane region" description="Helical; Name=M2" evidence="1">
    <location>
        <begin position="157"/>
        <end position="178"/>
    </location>
</feature>
<feature type="topological domain" description="Cytoplasmic" evidence="1">
    <location>
        <begin position="179"/>
        <end position="427"/>
    </location>
</feature>
<feature type="region of interest" description="Polyphosphoinositide (PIP2)-binding" evidence="4">
    <location>
        <begin position="181"/>
        <end position="208"/>
    </location>
</feature>
<feature type="region of interest" description="Disordered" evidence="6">
    <location>
        <begin position="384"/>
        <end position="427"/>
    </location>
</feature>
<feature type="short sequence motif" description="Selectivity filter" evidence="1">
    <location>
        <begin position="142"/>
        <end position="147"/>
    </location>
</feature>
<feature type="short sequence motif" description="PDZ-binding" evidence="5">
    <location>
        <begin position="425"/>
        <end position="427"/>
    </location>
</feature>
<feature type="site" description="Role in the control of polyamine-mediated channel gating and in the blocking by intracellular magnesium" evidence="1">
    <location>
        <position position="172"/>
    </location>
</feature>
<feature type="modified residue" description="S-nitrosocysteine" evidence="3">
    <location>
        <position position="76"/>
    </location>
</feature>
<keyword id="KW-1003">Cell membrane</keyword>
<keyword id="KW-0407">Ion channel</keyword>
<keyword id="KW-0406">Ion transport</keyword>
<keyword id="KW-0472">Membrane</keyword>
<keyword id="KW-0630">Potassium</keyword>
<keyword id="KW-0633">Potassium transport</keyword>
<keyword id="KW-1185">Reference proteome</keyword>
<keyword id="KW-0702">S-nitrosylation</keyword>
<keyword id="KW-0812">Transmembrane</keyword>
<keyword id="KW-1133">Transmembrane helix</keyword>
<keyword id="KW-0813">Transport</keyword>
<keyword id="KW-0851">Voltage-gated channel</keyword>
<sequence length="427" mass="48304">MGSVRTNRYSIVSSEEDGMKLATMAVANGFGNGKSKVHTRQQCRSRFVKKDGHCNVQFINVGEKGQRYLADIFTTCVDIRWRWMLVIFCLAFVLSWLFFGCVFWLIALLHGDLDASKESKACVSEVNSFTAAFLFSIETQTTIGYGFRCVTDECPVAVFMVVFQSIVGCIIDAFIIGAVMAKMAKPKKRNETLVFSHNAVIAMRDGKLCLMWRVGNLRKSHLVEAHVRAQLLKSRITSEGEYIPLDQIDINVGFDSGIDRIFLVSPITIVHEIDEDSPLYDLSKQDIDNADFEIVVILEGMVEATAMTTQCRSSYLANEILWGHRYEPVLFEEKHYYKVDYSRFHKTYEVPNTPLCSARDLAEKKYILSNANSFCYENEVALTSKEEDDSENGVPESTSTDTPPDLDLHNQASVPLEPRPLRRESEI</sequence>
<protein>
    <recommendedName>
        <fullName>Inward rectifier potassium channel 2</fullName>
    </recommendedName>
    <alternativeName>
        <fullName>Cardiac inward rectifier potassium channel</fullName>
    </alternativeName>
    <alternativeName>
        <fullName>Inward rectifier K(+) channel Kir2.1</fullName>
        <shortName>IRK-1</shortName>
    </alternativeName>
    <alternativeName>
        <fullName>Potassium channel, inwardly rectifying subfamily J member 2</fullName>
    </alternativeName>
</protein>
<dbReference type="EMBL" id="AF277647">
    <property type="protein sequence ID" value="AAF79214.1"/>
    <property type="molecule type" value="mRNA"/>
</dbReference>
<dbReference type="RefSeq" id="NP_001003120.1">
    <property type="nucleotide sequence ID" value="NM_001003120.4"/>
</dbReference>
<dbReference type="SMR" id="Q9MYY9"/>
<dbReference type="FunCoup" id="Q9MYY9">
    <property type="interactions" value="43"/>
</dbReference>
<dbReference type="STRING" id="9615.ENSCAFP00000015804"/>
<dbReference type="PaxDb" id="9612-ENSCAFP00000015804"/>
<dbReference type="Ensembl" id="ENSCAFT00000017080.5">
    <property type="protein sequence ID" value="ENSCAFP00000015804.3"/>
    <property type="gene ID" value="ENSCAFG00000010736.5"/>
</dbReference>
<dbReference type="Ensembl" id="ENSCAFT00030002967.1">
    <property type="protein sequence ID" value="ENSCAFP00030002634.1"/>
    <property type="gene ID" value="ENSCAFG00030001660.1"/>
</dbReference>
<dbReference type="Ensembl" id="ENSCAFT00040022651.1">
    <property type="protein sequence ID" value="ENSCAFP00040019626.1"/>
    <property type="gene ID" value="ENSCAFG00040012289.1"/>
</dbReference>
<dbReference type="Ensembl" id="ENSCAFT00845009690.1">
    <property type="protein sequence ID" value="ENSCAFP00845007576.1"/>
    <property type="gene ID" value="ENSCAFG00845005439.1"/>
</dbReference>
<dbReference type="GeneID" id="403717"/>
<dbReference type="KEGG" id="cfa:403717"/>
<dbReference type="CTD" id="3759"/>
<dbReference type="VEuPathDB" id="HostDB:ENSCAFG00845005439"/>
<dbReference type="VGNC" id="VGNC:42263">
    <property type="gene designation" value="KCNJ2"/>
</dbReference>
<dbReference type="eggNOG" id="KOG3827">
    <property type="taxonomic scope" value="Eukaryota"/>
</dbReference>
<dbReference type="GeneTree" id="ENSGT01030000234586"/>
<dbReference type="HOGENOM" id="CLU_022738_3_0_1"/>
<dbReference type="InParanoid" id="Q9MYY9"/>
<dbReference type="OMA" id="THPEMDH"/>
<dbReference type="OrthoDB" id="273257at2759"/>
<dbReference type="TreeFam" id="TF313676"/>
<dbReference type="Reactome" id="R-CFA-1296041">
    <property type="pathway name" value="Activation of G protein gated Potassium channels"/>
</dbReference>
<dbReference type="Reactome" id="R-CFA-1296053">
    <property type="pathway name" value="Classical Kir channels"/>
</dbReference>
<dbReference type="Reactome" id="R-CFA-5576886">
    <property type="pathway name" value="Phase 4 - resting membrane potential"/>
</dbReference>
<dbReference type="Reactome" id="R-CFA-997272">
    <property type="pathway name" value="Inhibition of voltage gated Ca2+ channels via Gbeta/gamma subunits"/>
</dbReference>
<dbReference type="Proteomes" id="UP000002254">
    <property type="component" value="Chromosome 9"/>
</dbReference>
<dbReference type="Proteomes" id="UP000694429">
    <property type="component" value="Chromosome 9"/>
</dbReference>
<dbReference type="Proteomes" id="UP000694542">
    <property type="component" value="Chromosome 9"/>
</dbReference>
<dbReference type="Proteomes" id="UP000805418">
    <property type="component" value="Chromosome 9"/>
</dbReference>
<dbReference type="Bgee" id="ENSCAFG00000010736">
    <property type="expression patterns" value="Expressed in tongue and 44 other cell types or tissues"/>
</dbReference>
<dbReference type="GO" id="GO:0016020">
    <property type="term" value="C:membrane"/>
    <property type="evidence" value="ECO:0000250"/>
    <property type="project" value="UniProtKB"/>
</dbReference>
<dbReference type="GO" id="GO:0034702">
    <property type="term" value="C:monoatomic ion channel complex"/>
    <property type="evidence" value="ECO:0007669"/>
    <property type="project" value="UniProtKB-KW"/>
</dbReference>
<dbReference type="GO" id="GO:0005886">
    <property type="term" value="C:plasma membrane"/>
    <property type="evidence" value="ECO:0000318"/>
    <property type="project" value="GO_Central"/>
</dbReference>
<dbReference type="GO" id="GO:0030315">
    <property type="term" value="C:T-tubule"/>
    <property type="evidence" value="ECO:0000250"/>
    <property type="project" value="UniProtKB"/>
</dbReference>
<dbReference type="GO" id="GO:0005242">
    <property type="term" value="F:inward rectifier potassium channel activity"/>
    <property type="evidence" value="ECO:0000250"/>
    <property type="project" value="UniProtKB"/>
</dbReference>
<dbReference type="GO" id="GO:0005546">
    <property type="term" value="F:phosphatidylinositol-4,5-bisphosphate binding"/>
    <property type="evidence" value="ECO:0000250"/>
    <property type="project" value="UniProtKB"/>
</dbReference>
<dbReference type="GO" id="GO:1990573">
    <property type="term" value="P:potassium ion import across plasma membrane"/>
    <property type="evidence" value="ECO:0000318"/>
    <property type="project" value="GO_Central"/>
</dbReference>
<dbReference type="GO" id="GO:0006813">
    <property type="term" value="P:potassium ion transport"/>
    <property type="evidence" value="ECO:0000250"/>
    <property type="project" value="UniProtKB"/>
</dbReference>
<dbReference type="GO" id="GO:0051289">
    <property type="term" value="P:protein homotetramerization"/>
    <property type="evidence" value="ECO:0000250"/>
    <property type="project" value="UniProtKB"/>
</dbReference>
<dbReference type="GO" id="GO:0034765">
    <property type="term" value="P:regulation of monoatomic ion transmembrane transport"/>
    <property type="evidence" value="ECO:0000318"/>
    <property type="project" value="GO_Central"/>
</dbReference>
<dbReference type="FunFam" id="1.10.287.70:FF:000039">
    <property type="entry name" value="ATP-sensitive inward rectifier potassium channel 12"/>
    <property type="match status" value="1"/>
</dbReference>
<dbReference type="FunFam" id="2.60.40.1400:FF:000001">
    <property type="entry name" value="G protein-activated inward rectifier potassium channel 2"/>
    <property type="match status" value="1"/>
</dbReference>
<dbReference type="Gene3D" id="1.10.287.70">
    <property type="match status" value="1"/>
</dbReference>
<dbReference type="Gene3D" id="2.60.40.1400">
    <property type="entry name" value="G protein-activated inward rectifier potassium channel 1"/>
    <property type="match status" value="1"/>
</dbReference>
<dbReference type="InterPro" id="IPR014756">
    <property type="entry name" value="Ig_E-set"/>
</dbReference>
<dbReference type="InterPro" id="IPR041647">
    <property type="entry name" value="IRK_C"/>
</dbReference>
<dbReference type="InterPro" id="IPR016449">
    <property type="entry name" value="K_chnl_inward-rec_Kir"/>
</dbReference>
<dbReference type="InterPro" id="IPR003271">
    <property type="entry name" value="K_chnl_inward-rec_Kir2.1"/>
</dbReference>
<dbReference type="InterPro" id="IPR013518">
    <property type="entry name" value="K_chnl_inward-rec_Kir_cyto"/>
</dbReference>
<dbReference type="InterPro" id="IPR013673">
    <property type="entry name" value="K_chnl_inward-rec_Kir_N"/>
</dbReference>
<dbReference type="InterPro" id="IPR040445">
    <property type="entry name" value="Kir_TM"/>
</dbReference>
<dbReference type="PANTHER" id="PTHR11767">
    <property type="entry name" value="INWARD RECTIFIER POTASSIUM CHANNEL"/>
    <property type="match status" value="1"/>
</dbReference>
<dbReference type="PANTHER" id="PTHR11767:SF43">
    <property type="entry name" value="INWARD RECTIFIER POTASSIUM CHANNEL 2"/>
    <property type="match status" value="1"/>
</dbReference>
<dbReference type="Pfam" id="PF01007">
    <property type="entry name" value="IRK"/>
    <property type="match status" value="1"/>
</dbReference>
<dbReference type="Pfam" id="PF17655">
    <property type="entry name" value="IRK_C"/>
    <property type="match status" value="1"/>
</dbReference>
<dbReference type="Pfam" id="PF08466">
    <property type="entry name" value="IRK_N"/>
    <property type="match status" value="1"/>
</dbReference>
<dbReference type="PIRSF" id="PIRSF005465">
    <property type="entry name" value="GIRK_kir"/>
    <property type="match status" value="1"/>
</dbReference>
<dbReference type="PRINTS" id="PR01324">
    <property type="entry name" value="KIR21CHANNEL"/>
</dbReference>
<dbReference type="PRINTS" id="PR01320">
    <property type="entry name" value="KIRCHANNEL"/>
</dbReference>
<dbReference type="SUPFAM" id="SSF81296">
    <property type="entry name" value="E set domains"/>
    <property type="match status" value="1"/>
</dbReference>
<dbReference type="SUPFAM" id="SSF81324">
    <property type="entry name" value="Voltage-gated potassium channels"/>
    <property type="match status" value="1"/>
</dbReference>
<accession>Q9MYY9</accession>
<name>KCNJ2_CANLF</name>
<evidence type="ECO:0000250" key="1"/>
<evidence type="ECO:0000250" key="2">
    <source>
        <dbReference type="UniProtKB" id="O19182"/>
    </source>
</evidence>
<evidence type="ECO:0000250" key="3">
    <source>
        <dbReference type="UniProtKB" id="P63252"/>
    </source>
</evidence>
<evidence type="ECO:0000250" key="4">
    <source>
        <dbReference type="UniProtKB" id="Q64273"/>
    </source>
</evidence>
<evidence type="ECO:0000255" key="5"/>
<evidence type="ECO:0000256" key="6">
    <source>
        <dbReference type="SAM" id="MobiDB-lite"/>
    </source>
</evidence>
<evidence type="ECO:0000305" key="7"/>
<reference key="1">
    <citation type="submission" date="2000-06" db="EMBL/GenBank/DDBJ databases">
        <title>Cloning and sequencing of Canis familiaris Kir2.1.</title>
        <authorList>
            <person name="Schueler T.M."/>
            <person name="Wegmann M."/>
            <person name="Derst C."/>
        </authorList>
    </citation>
    <scope>NUCLEOTIDE SEQUENCE [MRNA]</scope>
    <source>
        <strain>Cocker spaniel</strain>
        <tissue>Kidney</tissue>
    </source>
</reference>
<gene>
    <name type="primary">KCNJ2</name>
    <name type="synonym">IRK1</name>
</gene>
<comment type="function">
    <text evidence="3">Inward rectifier potassium channels are characterized by a greater tendency to allow potassium to flow into the cell rather than out of it. Their voltage dependence is regulated by the concentration of extracellular potassium; as external potassium is raised, the voltage range of the channel opening shifts to more positive voltages. The inward rectification is mainly due to the blockage of outward current by internal magnesium. Blocked by external barium or cesium. Probably participates in establishing action potential waveform and excitability of neuronal and muscle tissues.</text>
</comment>
<comment type="catalytic activity">
    <reaction evidence="3">
        <text>K(+)(in) = K(+)(out)</text>
        <dbReference type="Rhea" id="RHEA:29463"/>
        <dbReference type="ChEBI" id="CHEBI:29103"/>
    </reaction>
</comment>
<comment type="activity regulation">
    <text evidence="4">Activated by phosphatidylinositol 4,5 biphosphate (PtdIns(4,5)P2).</text>
</comment>
<comment type="subunit">
    <text evidence="3 4">Homotetramer. Homomultimeric and heteromultimeric association with KCNJ4/Kir2.3. Can form heteromeric channels with Kir2.6/KCNJ18 (By similarity). Associates, via its PDZ-recognition domain, with a complex containing LIN7A, LIN7B, LIN7C, DLG1, CASK and APBA1.</text>
</comment>
<comment type="subcellular location">
    <subcellularLocation>
        <location evidence="2">Cell membrane</location>
        <topology evidence="5">Multi-pass membrane protein</topology>
    </subcellularLocation>
    <subcellularLocation>
        <location evidence="4">Cell membrane</location>
        <location evidence="4">Sarcolemma</location>
        <location evidence="4">T-tubule</location>
    </subcellularLocation>
</comment>
<comment type="PTM">
    <text evidence="3">S-nitrosylation increases the open probability and inward rectifying currents.</text>
</comment>
<comment type="similarity">
    <text evidence="7">Belongs to the inward rectifier-type potassium channel (TC 1.A.2.1) family. KCNJ2 subfamily.</text>
</comment>
<organism>
    <name type="scientific">Canis lupus familiaris</name>
    <name type="common">Dog</name>
    <name type="synonym">Canis familiaris</name>
    <dbReference type="NCBI Taxonomy" id="9615"/>
    <lineage>
        <taxon>Eukaryota</taxon>
        <taxon>Metazoa</taxon>
        <taxon>Chordata</taxon>
        <taxon>Craniata</taxon>
        <taxon>Vertebrata</taxon>
        <taxon>Euteleostomi</taxon>
        <taxon>Mammalia</taxon>
        <taxon>Eutheria</taxon>
        <taxon>Laurasiatheria</taxon>
        <taxon>Carnivora</taxon>
        <taxon>Caniformia</taxon>
        <taxon>Canidae</taxon>
        <taxon>Canis</taxon>
    </lineage>
</organism>